<keyword id="KW-0058">Aromatic hydrocarbons catabolism</keyword>
<keyword id="KW-0520">NAD</keyword>
<keyword id="KW-0560">Oxidoreductase</keyword>
<gene>
    <name type="primary">xylQ</name>
</gene>
<organism>
    <name type="scientific">Sphingobium yanoikuyae</name>
    <name type="common">Sphingomonas yanoikuyae</name>
    <dbReference type="NCBI Taxonomy" id="13690"/>
    <lineage>
        <taxon>Bacteria</taxon>
        <taxon>Pseudomonadati</taxon>
        <taxon>Pseudomonadota</taxon>
        <taxon>Alphaproteobacteria</taxon>
        <taxon>Sphingomonadales</taxon>
        <taxon>Sphingomonadaceae</taxon>
        <taxon>Sphingobium</taxon>
    </lineage>
</organism>
<dbReference type="EC" id="1.2.1.10" evidence="1"/>
<dbReference type="EMBL" id="EF151283">
    <property type="protein sequence ID" value="ABM79796.1"/>
    <property type="molecule type" value="Genomic_DNA"/>
</dbReference>
<dbReference type="RefSeq" id="WP_037508677.1">
    <property type="nucleotide sequence ID" value="NZ_KL662202.1"/>
</dbReference>
<dbReference type="SMR" id="A2TC44"/>
<dbReference type="GO" id="GO:0008774">
    <property type="term" value="F:acetaldehyde dehydrogenase (acetylating) activity"/>
    <property type="evidence" value="ECO:0007669"/>
    <property type="project" value="UniProtKB-UniRule"/>
</dbReference>
<dbReference type="GO" id="GO:0051287">
    <property type="term" value="F:NAD binding"/>
    <property type="evidence" value="ECO:0007669"/>
    <property type="project" value="UniProtKB-UniRule"/>
</dbReference>
<dbReference type="GO" id="GO:0009056">
    <property type="term" value="P:catabolic process"/>
    <property type="evidence" value="ECO:0007669"/>
    <property type="project" value="UniProtKB-KW"/>
</dbReference>
<dbReference type="CDD" id="cd23933">
    <property type="entry name" value="ALDH_C"/>
    <property type="match status" value="1"/>
</dbReference>
<dbReference type="Gene3D" id="3.30.360.10">
    <property type="entry name" value="Dihydrodipicolinate Reductase, domain 2"/>
    <property type="match status" value="1"/>
</dbReference>
<dbReference type="Gene3D" id="3.40.50.720">
    <property type="entry name" value="NAD(P)-binding Rossmann-like Domain"/>
    <property type="match status" value="1"/>
</dbReference>
<dbReference type="HAMAP" id="MF_01657">
    <property type="entry name" value="Ac_ald_DH_ac"/>
    <property type="match status" value="1"/>
</dbReference>
<dbReference type="InterPro" id="IPR003361">
    <property type="entry name" value="Acetaldehyde_dehydrogenase"/>
</dbReference>
<dbReference type="InterPro" id="IPR015426">
    <property type="entry name" value="Acetylaldehyde_DH_C"/>
</dbReference>
<dbReference type="InterPro" id="IPR000683">
    <property type="entry name" value="Gfo/Idh/MocA-like_OxRdtase_N"/>
</dbReference>
<dbReference type="InterPro" id="IPR036291">
    <property type="entry name" value="NAD(P)-bd_dom_sf"/>
</dbReference>
<dbReference type="InterPro" id="IPR000534">
    <property type="entry name" value="Semialdehyde_DH_NAD-bd"/>
</dbReference>
<dbReference type="NCBIfam" id="TIGR03215">
    <property type="entry name" value="ac_ald_DH_ac"/>
    <property type="match status" value="1"/>
</dbReference>
<dbReference type="NCBIfam" id="NF006157">
    <property type="entry name" value="PRK08300.1"/>
    <property type="match status" value="1"/>
</dbReference>
<dbReference type="Pfam" id="PF09290">
    <property type="entry name" value="AcetDehyd-dimer"/>
    <property type="match status" value="1"/>
</dbReference>
<dbReference type="Pfam" id="PF01408">
    <property type="entry name" value="GFO_IDH_MocA"/>
    <property type="match status" value="1"/>
</dbReference>
<dbReference type="PIRSF" id="PIRSF015689">
    <property type="entry name" value="Actaldh_dh_actl"/>
    <property type="match status" value="1"/>
</dbReference>
<dbReference type="SMART" id="SM00859">
    <property type="entry name" value="Semialdhyde_dh"/>
    <property type="match status" value="1"/>
</dbReference>
<dbReference type="SUPFAM" id="SSF55347">
    <property type="entry name" value="Glyceraldehyde-3-phosphate dehydrogenase-like, C-terminal domain"/>
    <property type="match status" value="1"/>
</dbReference>
<dbReference type="SUPFAM" id="SSF51735">
    <property type="entry name" value="NAD(P)-binding Rossmann-fold domains"/>
    <property type="match status" value="1"/>
</dbReference>
<name>ACDH_SPHYA</name>
<sequence>MTKMKCAIIGSGNIGTDLMIKLLKGSDTLELAAVVGIDPASEGLAMARERGVATTHEGIEGLRKLPAYPEIGIAFDATSAYAHKEHDAALQADGKLVVDLTPAAIGPFFVPPVGGVLDSEIRNVNMVTCGGQATIPIVAAVSRVTPVHYAEIVASVSSRSAGPGTRANIDEFTRTTAQAIEIVGGAGRGRAIIILNPAEPPMIMRDTIFTLTDQVDEDAIRASVKEMVETVQAYVPGYRLKQEVQFERFGSNRPLKIPGYGEFVGLKTSVFLEVEGAGDYLPKYSGNLDIMTAAAKAAGERLAQQRLEKVAA</sequence>
<comment type="catalytic activity">
    <reaction evidence="1">
        <text>acetaldehyde + NAD(+) + CoA = acetyl-CoA + NADH + H(+)</text>
        <dbReference type="Rhea" id="RHEA:23288"/>
        <dbReference type="ChEBI" id="CHEBI:15343"/>
        <dbReference type="ChEBI" id="CHEBI:15378"/>
        <dbReference type="ChEBI" id="CHEBI:57287"/>
        <dbReference type="ChEBI" id="CHEBI:57288"/>
        <dbReference type="ChEBI" id="CHEBI:57540"/>
        <dbReference type="ChEBI" id="CHEBI:57945"/>
        <dbReference type="EC" id="1.2.1.10"/>
    </reaction>
</comment>
<comment type="similarity">
    <text evidence="1">Belongs to the acetaldehyde dehydrogenase family.</text>
</comment>
<evidence type="ECO:0000255" key="1">
    <source>
        <dbReference type="HAMAP-Rule" id="MF_01657"/>
    </source>
</evidence>
<feature type="chain" id="PRO_0000387745" description="Acetaldehyde dehydrogenase">
    <location>
        <begin position="1"/>
        <end position="312"/>
    </location>
</feature>
<feature type="active site" description="Acyl-thioester intermediate" evidence="1">
    <location>
        <position position="129"/>
    </location>
</feature>
<feature type="binding site" evidence="1">
    <location>
        <begin position="11"/>
        <end position="14"/>
    </location>
    <ligand>
        <name>NAD(+)</name>
        <dbReference type="ChEBI" id="CHEBI:57540"/>
    </ligand>
</feature>
<feature type="binding site" evidence="1">
    <location>
        <begin position="160"/>
        <end position="168"/>
    </location>
    <ligand>
        <name>NAD(+)</name>
        <dbReference type="ChEBI" id="CHEBI:57540"/>
    </ligand>
</feature>
<feature type="binding site" evidence="1">
    <location>
        <position position="287"/>
    </location>
    <ligand>
        <name>NAD(+)</name>
        <dbReference type="ChEBI" id="CHEBI:57540"/>
    </ligand>
</feature>
<reference key="1">
    <citation type="journal article" date="2007" name="J. Ind. Microbiol. Biotechnol.">
        <title>Identification, cloning, and characterization of a multicomponent biphenyl dioxygenase from Sphingobium yanoikuyae B1.</title>
        <authorList>
            <person name="Chadhain S.M."/>
            <person name="Moritz E.M."/>
            <person name="Kim E."/>
            <person name="Zylstra G.J."/>
        </authorList>
    </citation>
    <scope>NUCLEOTIDE SEQUENCE [GENOMIC DNA]</scope>
    <source>
        <strain>DSM 6900 / JCM 10274 / B1</strain>
    </source>
</reference>
<proteinExistence type="inferred from homology"/>
<protein>
    <recommendedName>
        <fullName evidence="1">Acetaldehyde dehydrogenase</fullName>
        <ecNumber evidence="1">1.2.1.10</ecNumber>
    </recommendedName>
    <alternativeName>
        <fullName evidence="1">Acetaldehyde dehydrogenase [acetylating]</fullName>
    </alternativeName>
</protein>
<accession>A2TC44</accession>